<gene>
    <name evidence="1" type="primary">dapE</name>
    <name type="ordered locus">GOX1832</name>
</gene>
<organism>
    <name type="scientific">Gluconobacter oxydans (strain 621H)</name>
    <name type="common">Gluconobacter suboxydans</name>
    <dbReference type="NCBI Taxonomy" id="290633"/>
    <lineage>
        <taxon>Bacteria</taxon>
        <taxon>Pseudomonadati</taxon>
        <taxon>Pseudomonadota</taxon>
        <taxon>Alphaproteobacteria</taxon>
        <taxon>Acetobacterales</taxon>
        <taxon>Acetobacteraceae</taxon>
        <taxon>Gluconobacter</taxon>
    </lineage>
</organism>
<feature type="chain" id="PRO_0000375573" description="Succinyl-diaminopimelate desuccinylase">
    <location>
        <begin position="1"/>
        <end position="381"/>
    </location>
</feature>
<feature type="active site" evidence="1">
    <location>
        <position position="78"/>
    </location>
</feature>
<feature type="active site" description="Proton acceptor" evidence="1">
    <location>
        <position position="140"/>
    </location>
</feature>
<feature type="binding site" evidence="1">
    <location>
        <position position="76"/>
    </location>
    <ligand>
        <name>Zn(2+)</name>
        <dbReference type="ChEBI" id="CHEBI:29105"/>
        <label>1</label>
    </ligand>
</feature>
<feature type="binding site" evidence="1">
    <location>
        <position position="107"/>
    </location>
    <ligand>
        <name>Zn(2+)</name>
        <dbReference type="ChEBI" id="CHEBI:29105"/>
        <label>1</label>
    </ligand>
</feature>
<feature type="binding site" evidence="1">
    <location>
        <position position="107"/>
    </location>
    <ligand>
        <name>Zn(2+)</name>
        <dbReference type="ChEBI" id="CHEBI:29105"/>
        <label>2</label>
    </ligand>
</feature>
<feature type="binding site" evidence="1">
    <location>
        <position position="141"/>
    </location>
    <ligand>
        <name>Zn(2+)</name>
        <dbReference type="ChEBI" id="CHEBI:29105"/>
        <label>2</label>
    </ligand>
</feature>
<feature type="binding site" evidence="1">
    <location>
        <position position="169"/>
    </location>
    <ligand>
        <name>Zn(2+)</name>
        <dbReference type="ChEBI" id="CHEBI:29105"/>
        <label>1</label>
    </ligand>
</feature>
<feature type="binding site" evidence="1">
    <location>
        <position position="354"/>
    </location>
    <ligand>
        <name>Zn(2+)</name>
        <dbReference type="ChEBI" id="CHEBI:29105"/>
        <label>2</label>
    </ligand>
</feature>
<name>DAPE_GLUOX</name>
<dbReference type="EC" id="3.5.1.18" evidence="1"/>
<dbReference type="EMBL" id="CP000009">
    <property type="protein sequence ID" value="AAW61571.1"/>
    <property type="status" value="ALT_INIT"/>
    <property type="molecule type" value="Genomic_DNA"/>
</dbReference>
<dbReference type="RefSeq" id="WP_041242742.1">
    <property type="nucleotide sequence ID" value="NC_006677.1"/>
</dbReference>
<dbReference type="SMR" id="Q5FPX5"/>
<dbReference type="STRING" id="290633.GOX1832"/>
<dbReference type="KEGG" id="gox:GOX1832"/>
<dbReference type="eggNOG" id="COG0624">
    <property type="taxonomic scope" value="Bacteria"/>
</dbReference>
<dbReference type="HOGENOM" id="CLU_021802_4_0_5"/>
<dbReference type="UniPathway" id="UPA00034">
    <property type="reaction ID" value="UER00021"/>
</dbReference>
<dbReference type="Proteomes" id="UP000006375">
    <property type="component" value="Chromosome"/>
</dbReference>
<dbReference type="GO" id="GO:0008777">
    <property type="term" value="F:acetylornithine deacetylase activity"/>
    <property type="evidence" value="ECO:0007669"/>
    <property type="project" value="TreeGrafter"/>
</dbReference>
<dbReference type="GO" id="GO:0050897">
    <property type="term" value="F:cobalt ion binding"/>
    <property type="evidence" value="ECO:0007669"/>
    <property type="project" value="UniProtKB-UniRule"/>
</dbReference>
<dbReference type="GO" id="GO:0009014">
    <property type="term" value="F:succinyl-diaminopimelate desuccinylase activity"/>
    <property type="evidence" value="ECO:0007669"/>
    <property type="project" value="UniProtKB-UniRule"/>
</dbReference>
<dbReference type="GO" id="GO:0008270">
    <property type="term" value="F:zinc ion binding"/>
    <property type="evidence" value="ECO:0007669"/>
    <property type="project" value="UniProtKB-UniRule"/>
</dbReference>
<dbReference type="GO" id="GO:0019877">
    <property type="term" value="P:diaminopimelate biosynthetic process"/>
    <property type="evidence" value="ECO:0007669"/>
    <property type="project" value="UniProtKB-UniRule"/>
</dbReference>
<dbReference type="GO" id="GO:0006526">
    <property type="term" value="P:L-arginine biosynthetic process"/>
    <property type="evidence" value="ECO:0007669"/>
    <property type="project" value="TreeGrafter"/>
</dbReference>
<dbReference type="GO" id="GO:0009089">
    <property type="term" value="P:lysine biosynthetic process via diaminopimelate"/>
    <property type="evidence" value="ECO:0007669"/>
    <property type="project" value="UniProtKB-UniRule"/>
</dbReference>
<dbReference type="CDD" id="cd03891">
    <property type="entry name" value="M20_DapE_proteobac"/>
    <property type="match status" value="1"/>
</dbReference>
<dbReference type="Gene3D" id="3.40.630.10">
    <property type="entry name" value="Zn peptidases"/>
    <property type="match status" value="2"/>
</dbReference>
<dbReference type="HAMAP" id="MF_01690">
    <property type="entry name" value="DapE"/>
    <property type="match status" value="1"/>
</dbReference>
<dbReference type="InterPro" id="IPR001261">
    <property type="entry name" value="ArgE/DapE_CS"/>
</dbReference>
<dbReference type="InterPro" id="IPR036264">
    <property type="entry name" value="Bact_exopeptidase_dim_dom"/>
</dbReference>
<dbReference type="InterPro" id="IPR005941">
    <property type="entry name" value="DapE_proteobac"/>
</dbReference>
<dbReference type="InterPro" id="IPR002933">
    <property type="entry name" value="Peptidase_M20"/>
</dbReference>
<dbReference type="InterPro" id="IPR011650">
    <property type="entry name" value="Peptidase_M20_dimer"/>
</dbReference>
<dbReference type="InterPro" id="IPR050072">
    <property type="entry name" value="Peptidase_M20A"/>
</dbReference>
<dbReference type="NCBIfam" id="TIGR01246">
    <property type="entry name" value="dapE_proteo"/>
    <property type="match status" value="1"/>
</dbReference>
<dbReference type="NCBIfam" id="NF009557">
    <property type="entry name" value="PRK13009.1"/>
    <property type="match status" value="1"/>
</dbReference>
<dbReference type="PANTHER" id="PTHR43808">
    <property type="entry name" value="ACETYLORNITHINE DEACETYLASE"/>
    <property type="match status" value="1"/>
</dbReference>
<dbReference type="PANTHER" id="PTHR43808:SF31">
    <property type="entry name" value="N-ACETYL-L-CITRULLINE DEACETYLASE"/>
    <property type="match status" value="1"/>
</dbReference>
<dbReference type="Pfam" id="PF07687">
    <property type="entry name" value="M20_dimer"/>
    <property type="match status" value="1"/>
</dbReference>
<dbReference type="Pfam" id="PF01546">
    <property type="entry name" value="Peptidase_M20"/>
    <property type="match status" value="1"/>
</dbReference>
<dbReference type="SUPFAM" id="SSF55031">
    <property type="entry name" value="Bacterial exopeptidase dimerisation domain"/>
    <property type="match status" value="1"/>
</dbReference>
<dbReference type="SUPFAM" id="SSF53187">
    <property type="entry name" value="Zn-dependent exopeptidases"/>
    <property type="match status" value="1"/>
</dbReference>
<dbReference type="PROSITE" id="PS00759">
    <property type="entry name" value="ARGE_DAPE_CPG2_2"/>
    <property type="match status" value="1"/>
</dbReference>
<evidence type="ECO:0000255" key="1">
    <source>
        <dbReference type="HAMAP-Rule" id="MF_01690"/>
    </source>
</evidence>
<evidence type="ECO:0000305" key="2"/>
<accession>Q5FPX5</accession>
<sequence length="381" mass="40271">MTGSTFPTDPVALARDLLRCQSVTPADGGAQALLAGVLEGMGFETFHLPFGPADVPTPNLYARLGKGHPALCFAGHTDVVPPGEGWAHDPFAAVIEGDRLYGRGIADMKGGVACFVAAVARRLEQGPLKGSVSLLITGDEEGPAHFGTKPVIEWLAERGELPDFCVLGEPTNPQALGDVIKIGRRGSMNAVVTVHGTQGHVAYPHLADNPVHRLLAAFSELTARELDAGSEWFDPSSLQVTSIDVGNGATNIIPGSAVGRLNIRFNDLHTGAALTAWIEDVVRRHAPQADVQVSISGEAFLTQPGDAVTCLSEAVRSVTGRTPRLDTGGGTSDARFISQYCEVAEFGLVGATMHKRDENVELGTLEDLTRIYLAFMEGYGL</sequence>
<protein>
    <recommendedName>
        <fullName evidence="1">Succinyl-diaminopimelate desuccinylase</fullName>
        <shortName evidence="1">SDAP desuccinylase</shortName>
        <ecNumber evidence="1">3.5.1.18</ecNumber>
    </recommendedName>
    <alternativeName>
        <fullName evidence="1">N-succinyl-LL-2,6-diaminoheptanedioate amidohydrolase</fullName>
    </alternativeName>
</protein>
<comment type="function">
    <text evidence="1">Catalyzes the hydrolysis of N-succinyl-L,L-diaminopimelic acid (SDAP), forming succinate and LL-2,6-diaminopimelate (DAP), an intermediate involved in the bacterial biosynthesis of lysine and meso-diaminopimelic acid, an essential component of bacterial cell walls.</text>
</comment>
<comment type="catalytic activity">
    <reaction evidence="1">
        <text>N-succinyl-(2S,6S)-2,6-diaminopimelate + H2O = (2S,6S)-2,6-diaminopimelate + succinate</text>
        <dbReference type="Rhea" id="RHEA:22608"/>
        <dbReference type="ChEBI" id="CHEBI:15377"/>
        <dbReference type="ChEBI" id="CHEBI:30031"/>
        <dbReference type="ChEBI" id="CHEBI:57609"/>
        <dbReference type="ChEBI" id="CHEBI:58087"/>
        <dbReference type="EC" id="3.5.1.18"/>
    </reaction>
</comment>
<comment type="cofactor">
    <cofactor evidence="1">
        <name>Zn(2+)</name>
        <dbReference type="ChEBI" id="CHEBI:29105"/>
    </cofactor>
    <cofactor evidence="1">
        <name>Co(2+)</name>
        <dbReference type="ChEBI" id="CHEBI:48828"/>
    </cofactor>
    <text evidence="1">Binds 2 Zn(2+) or Co(2+) ions per subunit.</text>
</comment>
<comment type="pathway">
    <text evidence="1">Amino-acid biosynthesis; L-lysine biosynthesis via DAP pathway; LL-2,6-diaminopimelate from (S)-tetrahydrodipicolinate (succinylase route): step 3/3.</text>
</comment>
<comment type="subunit">
    <text evidence="1">Homodimer.</text>
</comment>
<comment type="similarity">
    <text evidence="1">Belongs to the peptidase M20A family. DapE subfamily.</text>
</comment>
<comment type="sequence caution" evidence="2">
    <conflict type="erroneous initiation">
        <sequence resource="EMBL-CDS" id="AAW61571"/>
    </conflict>
</comment>
<reference key="1">
    <citation type="journal article" date="2005" name="Nat. Biotechnol.">
        <title>Complete genome sequence of the acetic acid bacterium Gluconobacter oxydans.</title>
        <authorList>
            <person name="Prust C."/>
            <person name="Hoffmeister M."/>
            <person name="Liesegang H."/>
            <person name="Wiezer A."/>
            <person name="Fricke W.F."/>
            <person name="Ehrenreich A."/>
            <person name="Gottschalk G."/>
            <person name="Deppenmeier U."/>
        </authorList>
    </citation>
    <scope>NUCLEOTIDE SEQUENCE [LARGE SCALE GENOMIC DNA]</scope>
    <source>
        <strain>621H</strain>
    </source>
</reference>
<proteinExistence type="inferred from homology"/>
<keyword id="KW-0028">Amino-acid biosynthesis</keyword>
<keyword id="KW-0170">Cobalt</keyword>
<keyword id="KW-0220">Diaminopimelate biosynthesis</keyword>
<keyword id="KW-0378">Hydrolase</keyword>
<keyword id="KW-0457">Lysine biosynthesis</keyword>
<keyword id="KW-0479">Metal-binding</keyword>
<keyword id="KW-1185">Reference proteome</keyword>
<keyword id="KW-0862">Zinc</keyword>